<protein>
    <recommendedName>
        <fullName evidence="1">Small ribosomal subunit protein bS21</fullName>
    </recommendedName>
    <alternativeName>
        <fullName evidence="2">30S ribosomal protein S21</fullName>
    </alternativeName>
</protein>
<accession>P66523</accession>
<accession>Q99TS1</accession>
<name>RS21_STAES</name>
<reference key="1">
    <citation type="journal article" date="2003" name="Mol. Microbiol.">
        <title>Genome-based analysis of virulence genes in a non-biofilm-forming Staphylococcus epidermidis strain (ATCC 12228).</title>
        <authorList>
            <person name="Zhang Y.-Q."/>
            <person name="Ren S.-X."/>
            <person name="Li H.-L."/>
            <person name="Wang Y.-X."/>
            <person name="Fu G."/>
            <person name="Yang J."/>
            <person name="Qin Z.-Q."/>
            <person name="Miao Y.-G."/>
            <person name="Wang W.-Y."/>
            <person name="Chen R.-S."/>
            <person name="Shen Y."/>
            <person name="Chen Z."/>
            <person name="Yuan Z.-H."/>
            <person name="Zhao G.-P."/>
            <person name="Qu D."/>
            <person name="Danchin A."/>
            <person name="Wen Y.-M."/>
        </authorList>
    </citation>
    <scope>NUCLEOTIDE SEQUENCE [LARGE SCALE GENOMIC DNA]</scope>
    <source>
        <strain>ATCC 12228 / FDA PCI 1200</strain>
    </source>
</reference>
<organism>
    <name type="scientific">Staphylococcus epidermidis (strain ATCC 12228 / FDA PCI 1200)</name>
    <dbReference type="NCBI Taxonomy" id="176280"/>
    <lineage>
        <taxon>Bacteria</taxon>
        <taxon>Bacillati</taxon>
        <taxon>Bacillota</taxon>
        <taxon>Bacilli</taxon>
        <taxon>Bacillales</taxon>
        <taxon>Staphylococcaceae</taxon>
        <taxon>Staphylococcus</taxon>
    </lineage>
</organism>
<evidence type="ECO:0000255" key="1">
    <source>
        <dbReference type="HAMAP-Rule" id="MF_00358"/>
    </source>
</evidence>
<evidence type="ECO:0000305" key="2"/>
<comment type="similarity">
    <text evidence="1">Belongs to the bacterial ribosomal protein bS21 family.</text>
</comment>
<keyword id="KW-0687">Ribonucleoprotein</keyword>
<keyword id="KW-0689">Ribosomal protein</keyword>
<dbReference type="EMBL" id="AE015929">
    <property type="protein sequence ID" value="AAO04861.1"/>
    <property type="molecule type" value="Genomic_DNA"/>
</dbReference>
<dbReference type="RefSeq" id="NP_764817.1">
    <property type="nucleotide sequence ID" value="NC_004461.1"/>
</dbReference>
<dbReference type="RefSeq" id="WP_000048060.1">
    <property type="nucleotide sequence ID" value="NZ_WBME01000008.1"/>
</dbReference>
<dbReference type="SMR" id="P66523"/>
<dbReference type="GeneID" id="98345946"/>
<dbReference type="KEGG" id="sep:SE_1262"/>
<dbReference type="PATRIC" id="fig|176280.10.peg.1231"/>
<dbReference type="eggNOG" id="COG0828">
    <property type="taxonomic scope" value="Bacteria"/>
</dbReference>
<dbReference type="HOGENOM" id="CLU_159258_3_2_9"/>
<dbReference type="OrthoDB" id="9799244at2"/>
<dbReference type="PRO" id="PR:P66523"/>
<dbReference type="Proteomes" id="UP000001411">
    <property type="component" value="Chromosome"/>
</dbReference>
<dbReference type="GO" id="GO:1990904">
    <property type="term" value="C:ribonucleoprotein complex"/>
    <property type="evidence" value="ECO:0007669"/>
    <property type="project" value="UniProtKB-KW"/>
</dbReference>
<dbReference type="GO" id="GO:0005840">
    <property type="term" value="C:ribosome"/>
    <property type="evidence" value="ECO:0007669"/>
    <property type="project" value="UniProtKB-KW"/>
</dbReference>
<dbReference type="GO" id="GO:0003735">
    <property type="term" value="F:structural constituent of ribosome"/>
    <property type="evidence" value="ECO:0007669"/>
    <property type="project" value="InterPro"/>
</dbReference>
<dbReference type="GO" id="GO:0006412">
    <property type="term" value="P:translation"/>
    <property type="evidence" value="ECO:0007669"/>
    <property type="project" value="UniProtKB-UniRule"/>
</dbReference>
<dbReference type="Gene3D" id="1.20.5.1150">
    <property type="entry name" value="Ribosomal protein S8"/>
    <property type="match status" value="1"/>
</dbReference>
<dbReference type="HAMAP" id="MF_00358">
    <property type="entry name" value="Ribosomal_bS21"/>
    <property type="match status" value="1"/>
</dbReference>
<dbReference type="InterPro" id="IPR001911">
    <property type="entry name" value="Ribosomal_bS21"/>
</dbReference>
<dbReference type="InterPro" id="IPR018278">
    <property type="entry name" value="Ribosomal_bS21_CS"/>
</dbReference>
<dbReference type="InterPro" id="IPR038380">
    <property type="entry name" value="Ribosomal_bS21_sf"/>
</dbReference>
<dbReference type="NCBIfam" id="TIGR00030">
    <property type="entry name" value="S21p"/>
    <property type="match status" value="1"/>
</dbReference>
<dbReference type="PANTHER" id="PTHR21109">
    <property type="entry name" value="MITOCHONDRIAL 28S RIBOSOMAL PROTEIN S21"/>
    <property type="match status" value="1"/>
</dbReference>
<dbReference type="PANTHER" id="PTHR21109:SF22">
    <property type="entry name" value="SMALL RIBOSOMAL SUBUNIT PROTEIN BS21"/>
    <property type="match status" value="1"/>
</dbReference>
<dbReference type="Pfam" id="PF01165">
    <property type="entry name" value="Ribosomal_S21"/>
    <property type="match status" value="1"/>
</dbReference>
<dbReference type="PRINTS" id="PR00976">
    <property type="entry name" value="RIBOSOMALS21"/>
</dbReference>
<dbReference type="PROSITE" id="PS01181">
    <property type="entry name" value="RIBOSOMAL_S21"/>
    <property type="match status" value="1"/>
</dbReference>
<gene>
    <name evidence="1" type="primary">rpsU</name>
    <name type="ordered locus">SE_1262</name>
</gene>
<sequence>MSKTVVRKNESLEDALRRFKRSVSKSGTIQEVRKREFYEKPSVKRKKKSEAARKRKFK</sequence>
<proteinExistence type="inferred from homology"/>
<feature type="chain" id="PRO_0000178379" description="Small ribosomal subunit protein bS21">
    <location>
        <begin position="1"/>
        <end position="58"/>
    </location>
</feature>